<evidence type="ECO:0000255" key="1">
    <source>
        <dbReference type="HAMAP-Rule" id="MF_00137"/>
    </source>
</evidence>
<reference key="1">
    <citation type="journal article" date="2011" name="Proc. Natl. Acad. Sci. U.S.A.">
        <title>Genomic anatomy of Escherichia coli O157:H7 outbreaks.</title>
        <authorList>
            <person name="Eppinger M."/>
            <person name="Mammel M.K."/>
            <person name="Leclerc J.E."/>
            <person name="Ravel J."/>
            <person name="Cebula T.A."/>
        </authorList>
    </citation>
    <scope>NUCLEOTIDE SEQUENCE [LARGE SCALE GENOMIC DNA]</scope>
    <source>
        <strain>EC4115 / EHEC</strain>
    </source>
</reference>
<name>PUR7_ECO5E</name>
<proteinExistence type="inferred from homology"/>
<accession>B5Z013</accession>
<feature type="chain" id="PRO_1000095981" description="Phosphoribosylaminoimidazole-succinocarboxamide synthase">
    <location>
        <begin position="1"/>
        <end position="237"/>
    </location>
</feature>
<sequence>MQKQAELYRGKAKTVYSTENPDLLVLEFRNDTSAGDGARIEQFDRKGMVNNKFNYFIMSKLAEAGIPTQMERLLSDTECLVKKLDMVPVECVVRNRAAGSLVKRLGIEEGIELNPPLFDLFLKNDAMHDPMVNESYCETFGWVSKENLARMKELTYKANDVLKKLFDDAGLILVDFKLEFGLYKGEVVLGDEFSPDGSRLWDKETLEKMDKDRFRQSLGGLIEAYEAVARRLGVQLD</sequence>
<gene>
    <name evidence="1" type="primary">purC</name>
    <name type="ordered locus">ECH74115_3698</name>
</gene>
<protein>
    <recommendedName>
        <fullName evidence="1">Phosphoribosylaminoimidazole-succinocarboxamide synthase</fullName>
        <ecNumber evidence="1">6.3.2.6</ecNumber>
    </recommendedName>
    <alternativeName>
        <fullName evidence="1">SAICAR synthetase</fullName>
    </alternativeName>
</protein>
<organism>
    <name type="scientific">Escherichia coli O157:H7 (strain EC4115 / EHEC)</name>
    <dbReference type="NCBI Taxonomy" id="444450"/>
    <lineage>
        <taxon>Bacteria</taxon>
        <taxon>Pseudomonadati</taxon>
        <taxon>Pseudomonadota</taxon>
        <taxon>Gammaproteobacteria</taxon>
        <taxon>Enterobacterales</taxon>
        <taxon>Enterobacteriaceae</taxon>
        <taxon>Escherichia</taxon>
    </lineage>
</organism>
<comment type="catalytic activity">
    <reaction evidence="1">
        <text>5-amino-1-(5-phospho-D-ribosyl)imidazole-4-carboxylate + L-aspartate + ATP = (2S)-2-[5-amino-1-(5-phospho-beta-D-ribosyl)imidazole-4-carboxamido]succinate + ADP + phosphate + 2 H(+)</text>
        <dbReference type="Rhea" id="RHEA:22628"/>
        <dbReference type="ChEBI" id="CHEBI:15378"/>
        <dbReference type="ChEBI" id="CHEBI:29991"/>
        <dbReference type="ChEBI" id="CHEBI:30616"/>
        <dbReference type="ChEBI" id="CHEBI:43474"/>
        <dbReference type="ChEBI" id="CHEBI:58443"/>
        <dbReference type="ChEBI" id="CHEBI:77657"/>
        <dbReference type="ChEBI" id="CHEBI:456216"/>
        <dbReference type="EC" id="6.3.2.6"/>
    </reaction>
</comment>
<comment type="pathway">
    <text evidence="1">Purine metabolism; IMP biosynthesis via de novo pathway; 5-amino-1-(5-phospho-D-ribosyl)imidazole-4-carboxamide from 5-amino-1-(5-phospho-D-ribosyl)imidazole-4-carboxylate: step 1/2.</text>
</comment>
<comment type="similarity">
    <text evidence="1">Belongs to the SAICAR synthetase family.</text>
</comment>
<keyword id="KW-0067">ATP-binding</keyword>
<keyword id="KW-0436">Ligase</keyword>
<keyword id="KW-0547">Nucleotide-binding</keyword>
<keyword id="KW-0658">Purine biosynthesis</keyword>
<dbReference type="EC" id="6.3.2.6" evidence="1"/>
<dbReference type="EMBL" id="CP001164">
    <property type="protein sequence ID" value="ACI34854.1"/>
    <property type="molecule type" value="Genomic_DNA"/>
</dbReference>
<dbReference type="RefSeq" id="WP_001295467.1">
    <property type="nucleotide sequence ID" value="NC_011353.1"/>
</dbReference>
<dbReference type="SMR" id="B5Z013"/>
<dbReference type="GeneID" id="89517285"/>
<dbReference type="KEGG" id="ecf:ECH74115_3698"/>
<dbReference type="HOGENOM" id="CLU_061495_2_1_6"/>
<dbReference type="UniPathway" id="UPA00074">
    <property type="reaction ID" value="UER00131"/>
</dbReference>
<dbReference type="GO" id="GO:0005829">
    <property type="term" value="C:cytosol"/>
    <property type="evidence" value="ECO:0007669"/>
    <property type="project" value="TreeGrafter"/>
</dbReference>
<dbReference type="GO" id="GO:0005524">
    <property type="term" value="F:ATP binding"/>
    <property type="evidence" value="ECO:0007669"/>
    <property type="project" value="UniProtKB-KW"/>
</dbReference>
<dbReference type="GO" id="GO:0004639">
    <property type="term" value="F:phosphoribosylaminoimidazolesuccinocarboxamide synthase activity"/>
    <property type="evidence" value="ECO:0007669"/>
    <property type="project" value="UniProtKB-UniRule"/>
</dbReference>
<dbReference type="GO" id="GO:0006189">
    <property type="term" value="P:'de novo' IMP biosynthetic process"/>
    <property type="evidence" value="ECO:0007669"/>
    <property type="project" value="UniProtKB-UniRule"/>
</dbReference>
<dbReference type="GO" id="GO:0009236">
    <property type="term" value="P:cobalamin biosynthetic process"/>
    <property type="evidence" value="ECO:0007669"/>
    <property type="project" value="InterPro"/>
</dbReference>
<dbReference type="CDD" id="cd01415">
    <property type="entry name" value="SAICAR_synt_PurC"/>
    <property type="match status" value="1"/>
</dbReference>
<dbReference type="FunFam" id="3.30.200.20:FF:000086">
    <property type="entry name" value="Phosphoribosylaminoimidazole-succinocarboxamide synthase"/>
    <property type="match status" value="1"/>
</dbReference>
<dbReference type="FunFam" id="3.30.470.20:FF:000006">
    <property type="entry name" value="Phosphoribosylaminoimidazole-succinocarboxamide synthase"/>
    <property type="match status" value="1"/>
</dbReference>
<dbReference type="Gene3D" id="3.30.470.20">
    <property type="entry name" value="ATP-grasp fold, B domain"/>
    <property type="match status" value="1"/>
</dbReference>
<dbReference type="Gene3D" id="3.30.200.20">
    <property type="entry name" value="Phosphorylase Kinase, domain 1"/>
    <property type="match status" value="1"/>
</dbReference>
<dbReference type="HAMAP" id="MF_00137">
    <property type="entry name" value="SAICAR_synth"/>
    <property type="match status" value="1"/>
</dbReference>
<dbReference type="InterPro" id="IPR028923">
    <property type="entry name" value="SAICAR_synt/ADE2_N"/>
</dbReference>
<dbReference type="InterPro" id="IPR033934">
    <property type="entry name" value="SAICAR_synt_PurC"/>
</dbReference>
<dbReference type="InterPro" id="IPR001636">
    <property type="entry name" value="SAICAR_synth"/>
</dbReference>
<dbReference type="InterPro" id="IPR050089">
    <property type="entry name" value="SAICAR_synthetase"/>
</dbReference>
<dbReference type="InterPro" id="IPR018236">
    <property type="entry name" value="SAICAR_synthetase_CS"/>
</dbReference>
<dbReference type="NCBIfam" id="TIGR00081">
    <property type="entry name" value="purC"/>
    <property type="match status" value="1"/>
</dbReference>
<dbReference type="PANTHER" id="PTHR43599">
    <property type="entry name" value="MULTIFUNCTIONAL PROTEIN ADE2"/>
    <property type="match status" value="1"/>
</dbReference>
<dbReference type="PANTHER" id="PTHR43599:SF3">
    <property type="entry name" value="SI:DKEY-6E2.2"/>
    <property type="match status" value="1"/>
</dbReference>
<dbReference type="Pfam" id="PF01259">
    <property type="entry name" value="SAICAR_synt"/>
    <property type="match status" value="1"/>
</dbReference>
<dbReference type="SUPFAM" id="SSF56104">
    <property type="entry name" value="SAICAR synthase-like"/>
    <property type="match status" value="1"/>
</dbReference>
<dbReference type="PROSITE" id="PS01057">
    <property type="entry name" value="SAICAR_SYNTHETASE_1"/>
    <property type="match status" value="1"/>
</dbReference>
<dbReference type="PROSITE" id="PS01058">
    <property type="entry name" value="SAICAR_SYNTHETASE_2"/>
    <property type="match status" value="1"/>
</dbReference>